<proteinExistence type="inferred from homology"/>
<feature type="chain" id="PRO_1000193985" description="Large ribosomal subunit protein eL20">
    <location>
        <begin position="1"/>
        <end position="58"/>
    </location>
</feature>
<feature type="region of interest" description="Disordered" evidence="2">
    <location>
        <begin position="37"/>
        <end position="58"/>
    </location>
</feature>
<feature type="compositionally biased region" description="Basic and acidic residues" evidence="2">
    <location>
        <begin position="48"/>
        <end position="58"/>
    </location>
</feature>
<reference key="1">
    <citation type="journal article" date="2016" name="Stand. Genomic Sci.">
        <title>Complete genome sequence of the Antarctic Halorubrum lacusprofundi type strain ACAM 34.</title>
        <authorList>
            <person name="Anderson I.J."/>
            <person name="DasSarma P."/>
            <person name="Lucas S."/>
            <person name="Copeland A."/>
            <person name="Lapidus A."/>
            <person name="Del Rio T.G."/>
            <person name="Tice H."/>
            <person name="Dalin E."/>
            <person name="Bruce D.C."/>
            <person name="Goodwin L."/>
            <person name="Pitluck S."/>
            <person name="Sims D."/>
            <person name="Brettin T.S."/>
            <person name="Detter J.C."/>
            <person name="Han C.S."/>
            <person name="Larimer F."/>
            <person name="Hauser L."/>
            <person name="Land M."/>
            <person name="Ivanova N."/>
            <person name="Richardson P."/>
            <person name="Cavicchioli R."/>
            <person name="DasSarma S."/>
            <person name="Woese C.R."/>
            <person name="Kyrpides N.C."/>
        </authorList>
    </citation>
    <scope>NUCLEOTIDE SEQUENCE [LARGE SCALE GENOMIC DNA]</scope>
    <source>
        <strain>ATCC 49239 / DSM 5036 / JCM 8891 / ACAM 34</strain>
    </source>
</reference>
<gene>
    <name evidence="1" type="primary">rpl18a</name>
    <name evidence="1" type="synonym">rpl20e</name>
    <name evidence="1" type="synonym">rplX</name>
    <name type="ordered locus">Hlac_0823</name>
</gene>
<organism>
    <name type="scientific">Halorubrum lacusprofundi (strain ATCC 49239 / DSM 5036 / JCM 8891 / ACAM 34)</name>
    <dbReference type="NCBI Taxonomy" id="416348"/>
    <lineage>
        <taxon>Archaea</taxon>
        <taxon>Methanobacteriati</taxon>
        <taxon>Methanobacteriota</taxon>
        <taxon>Stenosarchaea group</taxon>
        <taxon>Halobacteria</taxon>
        <taxon>Halobacteriales</taxon>
        <taxon>Haloferacaceae</taxon>
        <taxon>Halorubrum</taxon>
    </lineage>
</organism>
<accession>B9LUU5</accession>
<dbReference type="EMBL" id="CP001365">
    <property type="protein sequence ID" value="ACM56422.1"/>
    <property type="molecule type" value="Genomic_DNA"/>
</dbReference>
<dbReference type="RefSeq" id="WP_015909574.1">
    <property type="nucleotide sequence ID" value="NC_012029.1"/>
</dbReference>
<dbReference type="SMR" id="B9LUU5"/>
<dbReference type="GeneID" id="7400789"/>
<dbReference type="KEGG" id="hla:Hlac_0823"/>
<dbReference type="eggNOG" id="arCOG04175">
    <property type="taxonomic scope" value="Archaea"/>
</dbReference>
<dbReference type="HOGENOM" id="CLU_177460_1_0_2"/>
<dbReference type="Proteomes" id="UP000000740">
    <property type="component" value="Chromosome 1"/>
</dbReference>
<dbReference type="GO" id="GO:1990904">
    <property type="term" value="C:ribonucleoprotein complex"/>
    <property type="evidence" value="ECO:0007669"/>
    <property type="project" value="UniProtKB-KW"/>
</dbReference>
<dbReference type="GO" id="GO:0005840">
    <property type="term" value="C:ribosome"/>
    <property type="evidence" value="ECO:0007669"/>
    <property type="project" value="UniProtKB-KW"/>
</dbReference>
<dbReference type="GO" id="GO:0070180">
    <property type="term" value="F:large ribosomal subunit rRNA binding"/>
    <property type="evidence" value="ECO:0007669"/>
    <property type="project" value="UniProtKB-UniRule"/>
</dbReference>
<dbReference type="GO" id="GO:0003735">
    <property type="term" value="F:structural constituent of ribosome"/>
    <property type="evidence" value="ECO:0007669"/>
    <property type="project" value="InterPro"/>
</dbReference>
<dbReference type="GO" id="GO:0006412">
    <property type="term" value="P:translation"/>
    <property type="evidence" value="ECO:0007669"/>
    <property type="project" value="UniProtKB-UniRule"/>
</dbReference>
<dbReference type="Gene3D" id="3.10.20.10">
    <property type="match status" value="1"/>
</dbReference>
<dbReference type="HAMAP" id="MF_00273">
    <property type="entry name" value="Ribosomal_eL20"/>
    <property type="match status" value="1"/>
</dbReference>
<dbReference type="InterPro" id="IPR028877">
    <property type="entry name" value="Ribosomal_eL20"/>
</dbReference>
<dbReference type="InterPro" id="IPR023573">
    <property type="entry name" value="Ribosomal_eL20_dom"/>
</dbReference>
<dbReference type="NCBIfam" id="NF001981">
    <property type="entry name" value="PRK00773.1-1"/>
    <property type="match status" value="1"/>
</dbReference>
<dbReference type="Pfam" id="PF01775">
    <property type="entry name" value="Ribosomal_L18A"/>
    <property type="match status" value="1"/>
</dbReference>
<dbReference type="SUPFAM" id="SSF160374">
    <property type="entry name" value="RplX-like"/>
    <property type="match status" value="1"/>
</dbReference>
<evidence type="ECO:0000255" key="1">
    <source>
        <dbReference type="HAMAP-Rule" id="MF_00273"/>
    </source>
</evidence>
<evidence type="ECO:0000256" key="2">
    <source>
        <dbReference type="SAM" id="MobiDB-lite"/>
    </source>
</evidence>
<evidence type="ECO:0000305" key="3"/>
<comment type="subunit">
    <text evidence="1">Part of the 50S ribosomal subunit. Binds 23S rRNA.</text>
</comment>
<comment type="similarity">
    <text evidence="1">Belongs to the eukaryotic ribosomal protein eL20 family.</text>
</comment>
<name>RL18A_HALLT</name>
<keyword id="KW-1185">Reference proteome</keyword>
<keyword id="KW-0687">Ribonucleoprotein</keyword>
<keyword id="KW-0689">Ribosomal protein</keyword>
<keyword id="KW-0694">RNA-binding</keyword>
<keyword id="KW-0699">rRNA-binding</keyword>
<sequence length="58" mass="6662">MSTYTVTGQFQSRDGFQPFTKDVEAENEDLARERIYTTVGSQHNRKRPQIEIKEVSAA</sequence>
<protein>
    <recommendedName>
        <fullName evidence="1">Large ribosomal subunit protein eL20</fullName>
    </recommendedName>
    <alternativeName>
        <fullName evidence="3">50S ribosomal protein L18Ae</fullName>
    </alternativeName>
    <alternativeName>
        <fullName evidence="1">50S ribosomal protein L20e</fullName>
    </alternativeName>
    <alternativeName>
        <fullName evidence="1">50S ribosomal protein LX</fullName>
    </alternativeName>
</protein>